<organism>
    <name type="scientific">Chlorobaculum parvum (strain DSM 263 / NCIMB 8327)</name>
    <name type="common">Chlorobium vibrioforme subsp. thiosulfatophilum</name>
    <dbReference type="NCBI Taxonomy" id="517417"/>
    <lineage>
        <taxon>Bacteria</taxon>
        <taxon>Pseudomonadati</taxon>
        <taxon>Chlorobiota</taxon>
        <taxon>Chlorobiia</taxon>
        <taxon>Chlorobiales</taxon>
        <taxon>Chlorobiaceae</taxon>
        <taxon>Chlorobaculum</taxon>
    </lineage>
</organism>
<keyword id="KW-0028">Amino-acid biosynthesis</keyword>
<keyword id="KW-0057">Aromatic amino acid biosynthesis</keyword>
<keyword id="KW-0963">Cytoplasm</keyword>
<keyword id="KW-0808">Transferase</keyword>
<feature type="chain" id="PRO_1000099679" description="3-phosphoshikimate 1-carboxyvinyltransferase">
    <location>
        <begin position="1"/>
        <end position="434"/>
    </location>
</feature>
<feature type="active site" description="Proton acceptor" evidence="1">
    <location>
        <position position="319"/>
    </location>
</feature>
<feature type="binding site" evidence="1">
    <location>
        <position position="15"/>
    </location>
    <ligand>
        <name>3-phosphoshikimate</name>
        <dbReference type="ChEBI" id="CHEBI:145989"/>
    </ligand>
</feature>
<feature type="binding site" evidence="1">
    <location>
        <position position="15"/>
    </location>
    <ligand>
        <name>phosphoenolpyruvate</name>
        <dbReference type="ChEBI" id="CHEBI:58702"/>
    </ligand>
</feature>
<feature type="binding site" evidence="1">
    <location>
        <position position="16"/>
    </location>
    <ligand>
        <name>3-phosphoshikimate</name>
        <dbReference type="ChEBI" id="CHEBI:145989"/>
    </ligand>
</feature>
<feature type="binding site" evidence="1">
    <location>
        <position position="20"/>
    </location>
    <ligand>
        <name>3-phosphoshikimate</name>
        <dbReference type="ChEBI" id="CHEBI:145989"/>
    </ligand>
</feature>
<feature type="binding site" evidence="1">
    <location>
        <position position="96"/>
    </location>
    <ligand>
        <name>phosphoenolpyruvate</name>
        <dbReference type="ChEBI" id="CHEBI:58702"/>
    </ligand>
</feature>
<feature type="binding site" evidence="1">
    <location>
        <position position="124"/>
    </location>
    <ligand>
        <name>phosphoenolpyruvate</name>
        <dbReference type="ChEBI" id="CHEBI:58702"/>
    </ligand>
</feature>
<feature type="binding site" evidence="1">
    <location>
        <position position="169"/>
    </location>
    <ligand>
        <name>3-phosphoshikimate</name>
        <dbReference type="ChEBI" id="CHEBI:145989"/>
    </ligand>
</feature>
<feature type="binding site" evidence="1">
    <location>
        <position position="171"/>
    </location>
    <ligand>
        <name>3-phosphoshikimate</name>
        <dbReference type="ChEBI" id="CHEBI:145989"/>
    </ligand>
</feature>
<feature type="binding site" evidence="1">
    <location>
        <position position="171"/>
    </location>
    <ligand>
        <name>phosphoenolpyruvate</name>
        <dbReference type="ChEBI" id="CHEBI:58702"/>
    </ligand>
</feature>
<feature type="binding site" evidence="1">
    <location>
        <position position="195"/>
    </location>
    <ligand>
        <name>3-phosphoshikimate</name>
        <dbReference type="ChEBI" id="CHEBI:145989"/>
    </ligand>
</feature>
<feature type="binding site" evidence="1">
    <location>
        <position position="319"/>
    </location>
    <ligand>
        <name>3-phosphoshikimate</name>
        <dbReference type="ChEBI" id="CHEBI:145989"/>
    </ligand>
</feature>
<feature type="binding site" evidence="1">
    <location>
        <position position="346"/>
    </location>
    <ligand>
        <name>3-phosphoshikimate</name>
        <dbReference type="ChEBI" id="CHEBI:145989"/>
    </ligand>
</feature>
<feature type="binding site" evidence="1">
    <location>
        <position position="350"/>
    </location>
    <ligand>
        <name>phosphoenolpyruvate</name>
        <dbReference type="ChEBI" id="CHEBI:58702"/>
    </ligand>
</feature>
<feature type="binding site" evidence="1">
    <location>
        <position position="394"/>
    </location>
    <ligand>
        <name>phosphoenolpyruvate</name>
        <dbReference type="ChEBI" id="CHEBI:58702"/>
    </ligand>
</feature>
<proteinExistence type="inferred from homology"/>
<name>AROA_CHLP8</name>
<evidence type="ECO:0000255" key="1">
    <source>
        <dbReference type="HAMAP-Rule" id="MF_00210"/>
    </source>
</evidence>
<sequence length="434" mass="46570">MSVFQGEVSSLPPDKSISHRAAIIGSLAEGTTEITNFSGGFDNQSTLSVLRDLGISVRQDEVPAGDGRIVRHVVIESNGLWSFREPSEPLMCNNSGSTMRMMAGILAAQPFRSELVGDASLMKRPMKRVADPLRMMGADISLSDAGTAPVVINGTKDLKTIEYLLPVPSAQVKSLVALAALHADGQSKIIEPIRSRDHTELMLGLETIDRPDGVREIIIDGRKPIAAKPFKVPADPSAACFMIALGLLGERSEIVLRDVCLNPTRVAYIDVLQEAGAGLGIENVRSEGGEPVGDIVVRSCSSLAPLRISDHAVVAGVIDELPMLAVLSAFATGEFELHNATELRTKESDRIEAVVSNLERLGFACEQYPDGFVVKGRPTVNREEAVIECFDDHRIAMSFAIAAEAAGASLRLSDREVAGVSFPNFFALIESLKQ</sequence>
<comment type="function">
    <text evidence="1">Catalyzes the transfer of the enolpyruvyl moiety of phosphoenolpyruvate (PEP) to the 5-hydroxyl of shikimate-3-phosphate (S3P) to produce enolpyruvyl shikimate-3-phosphate and inorganic phosphate.</text>
</comment>
<comment type="catalytic activity">
    <reaction evidence="1">
        <text>3-phosphoshikimate + phosphoenolpyruvate = 5-O-(1-carboxyvinyl)-3-phosphoshikimate + phosphate</text>
        <dbReference type="Rhea" id="RHEA:21256"/>
        <dbReference type="ChEBI" id="CHEBI:43474"/>
        <dbReference type="ChEBI" id="CHEBI:57701"/>
        <dbReference type="ChEBI" id="CHEBI:58702"/>
        <dbReference type="ChEBI" id="CHEBI:145989"/>
        <dbReference type="EC" id="2.5.1.19"/>
    </reaction>
    <physiologicalReaction direction="left-to-right" evidence="1">
        <dbReference type="Rhea" id="RHEA:21257"/>
    </physiologicalReaction>
</comment>
<comment type="pathway">
    <text evidence="1">Metabolic intermediate biosynthesis; chorismate biosynthesis; chorismate from D-erythrose 4-phosphate and phosphoenolpyruvate: step 6/7.</text>
</comment>
<comment type="subunit">
    <text evidence="1">Monomer.</text>
</comment>
<comment type="subcellular location">
    <subcellularLocation>
        <location evidence="1">Cytoplasm</location>
    </subcellularLocation>
</comment>
<comment type="similarity">
    <text evidence="1">Belongs to the EPSP synthase family.</text>
</comment>
<dbReference type="EC" id="2.5.1.19" evidence="1"/>
<dbReference type="EMBL" id="CP001099">
    <property type="protein sequence ID" value="ACF10716.1"/>
    <property type="molecule type" value="Genomic_DNA"/>
</dbReference>
<dbReference type="RefSeq" id="WP_012501549.1">
    <property type="nucleotide sequence ID" value="NC_011027.1"/>
</dbReference>
<dbReference type="SMR" id="B3QQU6"/>
<dbReference type="STRING" id="517417.Cpar_0290"/>
<dbReference type="KEGG" id="cpc:Cpar_0290"/>
<dbReference type="eggNOG" id="COG0128">
    <property type="taxonomic scope" value="Bacteria"/>
</dbReference>
<dbReference type="HOGENOM" id="CLU_024321_0_1_10"/>
<dbReference type="OrthoDB" id="9809920at2"/>
<dbReference type="UniPathway" id="UPA00053">
    <property type="reaction ID" value="UER00089"/>
</dbReference>
<dbReference type="Proteomes" id="UP000008811">
    <property type="component" value="Chromosome"/>
</dbReference>
<dbReference type="GO" id="GO:0005737">
    <property type="term" value="C:cytoplasm"/>
    <property type="evidence" value="ECO:0007669"/>
    <property type="project" value="UniProtKB-SubCell"/>
</dbReference>
<dbReference type="GO" id="GO:0003866">
    <property type="term" value="F:3-phosphoshikimate 1-carboxyvinyltransferase activity"/>
    <property type="evidence" value="ECO:0007669"/>
    <property type="project" value="UniProtKB-UniRule"/>
</dbReference>
<dbReference type="GO" id="GO:0008652">
    <property type="term" value="P:amino acid biosynthetic process"/>
    <property type="evidence" value="ECO:0007669"/>
    <property type="project" value="UniProtKB-KW"/>
</dbReference>
<dbReference type="GO" id="GO:0009073">
    <property type="term" value="P:aromatic amino acid family biosynthetic process"/>
    <property type="evidence" value="ECO:0007669"/>
    <property type="project" value="UniProtKB-KW"/>
</dbReference>
<dbReference type="GO" id="GO:0009423">
    <property type="term" value="P:chorismate biosynthetic process"/>
    <property type="evidence" value="ECO:0007669"/>
    <property type="project" value="UniProtKB-UniRule"/>
</dbReference>
<dbReference type="CDD" id="cd01556">
    <property type="entry name" value="EPSP_synthase"/>
    <property type="match status" value="1"/>
</dbReference>
<dbReference type="FunFam" id="3.65.10.10:FF:000005">
    <property type="entry name" value="3-phosphoshikimate 1-carboxyvinyltransferase"/>
    <property type="match status" value="1"/>
</dbReference>
<dbReference type="Gene3D" id="3.65.10.10">
    <property type="entry name" value="Enolpyruvate transferase domain"/>
    <property type="match status" value="2"/>
</dbReference>
<dbReference type="HAMAP" id="MF_00210">
    <property type="entry name" value="EPSP_synth"/>
    <property type="match status" value="1"/>
</dbReference>
<dbReference type="InterPro" id="IPR001986">
    <property type="entry name" value="Enolpyruvate_Tfrase_dom"/>
</dbReference>
<dbReference type="InterPro" id="IPR036968">
    <property type="entry name" value="Enolpyruvate_Tfrase_sf"/>
</dbReference>
<dbReference type="InterPro" id="IPR006264">
    <property type="entry name" value="EPSP_synthase"/>
</dbReference>
<dbReference type="InterPro" id="IPR023193">
    <property type="entry name" value="EPSP_synthase_CS"/>
</dbReference>
<dbReference type="InterPro" id="IPR013792">
    <property type="entry name" value="RNA3'P_cycl/enolpyr_Trfase_a/b"/>
</dbReference>
<dbReference type="NCBIfam" id="TIGR01356">
    <property type="entry name" value="aroA"/>
    <property type="match status" value="1"/>
</dbReference>
<dbReference type="PANTHER" id="PTHR21090">
    <property type="entry name" value="AROM/DEHYDROQUINATE SYNTHASE"/>
    <property type="match status" value="1"/>
</dbReference>
<dbReference type="PANTHER" id="PTHR21090:SF5">
    <property type="entry name" value="PENTAFUNCTIONAL AROM POLYPEPTIDE"/>
    <property type="match status" value="1"/>
</dbReference>
<dbReference type="Pfam" id="PF00275">
    <property type="entry name" value="EPSP_synthase"/>
    <property type="match status" value="1"/>
</dbReference>
<dbReference type="PIRSF" id="PIRSF000505">
    <property type="entry name" value="EPSPS"/>
    <property type="match status" value="1"/>
</dbReference>
<dbReference type="SUPFAM" id="SSF55205">
    <property type="entry name" value="EPT/RTPC-like"/>
    <property type="match status" value="1"/>
</dbReference>
<dbReference type="PROSITE" id="PS00885">
    <property type="entry name" value="EPSP_SYNTHASE_2"/>
    <property type="match status" value="1"/>
</dbReference>
<gene>
    <name evidence="1" type="primary">aroA</name>
    <name type="ordered locus">Cpar_0290</name>
</gene>
<protein>
    <recommendedName>
        <fullName evidence="1">3-phosphoshikimate 1-carboxyvinyltransferase</fullName>
        <ecNumber evidence="1">2.5.1.19</ecNumber>
    </recommendedName>
    <alternativeName>
        <fullName evidence="1">5-enolpyruvylshikimate-3-phosphate synthase</fullName>
        <shortName evidence="1">EPSP synthase</shortName>
        <shortName evidence="1">EPSPS</shortName>
    </alternativeName>
</protein>
<reference key="1">
    <citation type="submission" date="2008-06" db="EMBL/GenBank/DDBJ databases">
        <title>Complete sequence of Chlorobaculum parvum NCIB 8327.</title>
        <authorList>
            <consortium name="US DOE Joint Genome Institute"/>
            <person name="Lucas S."/>
            <person name="Copeland A."/>
            <person name="Lapidus A."/>
            <person name="Glavina del Rio T."/>
            <person name="Dalin E."/>
            <person name="Tice H."/>
            <person name="Bruce D."/>
            <person name="Goodwin L."/>
            <person name="Pitluck S."/>
            <person name="Schmutz J."/>
            <person name="Larimer F."/>
            <person name="Land M."/>
            <person name="Hauser L."/>
            <person name="Kyrpides N."/>
            <person name="Mikhailova N."/>
            <person name="Zhao F."/>
            <person name="Li T."/>
            <person name="Liu Z."/>
            <person name="Overmann J."/>
            <person name="Bryant D.A."/>
            <person name="Richardson P."/>
        </authorList>
    </citation>
    <scope>NUCLEOTIDE SEQUENCE [LARGE SCALE GENOMIC DNA]</scope>
    <source>
        <strain>DSM 263 / NCIMB 8327</strain>
    </source>
</reference>
<accession>B3QQU6</accession>